<sequence length="124" mass="14624">MSTTNDNTTMQRLMITDMRPLSMESIITSLTKEIITHKFIYLINNECIVRKLDERQATFTFLVNYEMKLLHKVGSTIYKKYTEYNTKYGTFPMPIFINHDGFLECIGIKPTKHTPIIYKYDLNP</sequence>
<comment type="function">
    <text evidence="1">Plays a major role in antagonizing the type I IFN-mediated antiviral response. Acts cooperatively with NS1 to repress activation and nuclear translocation of host IFN-regulatory factor IRF3. Interacts with the host cytoplasmic sensor of viral nucleic acids RIGI and prevents the interaction with its downstream partner MAVS. Together with NS2, participates in the proteasomal degradation of host STAT2, IRF3, IRF7, TBK1 and RIGI through a NS-degradasome involving CUL2 and Elongin-C. The degradasome requires an intact mitochondrial MAVS. Induces host SOCS1 expression. Induces activation of NF-kappa-B. Suppresses premature apoptosis by an NF-kappa-B-dependent, interferon-independent mechanism promoting continued viral replication.</text>
</comment>
<comment type="subunit">
    <text evidence="1">Monomer (instable). Homomultimer. Heteromultimer with NS1. Interacts with host RIGI (via N-terminus); this interaction prevents host signaling pathway involved in interferon production. Interacts with host MAP1B/microtubule-associated protein 1B.</text>
</comment>
<comment type="subcellular location">
    <subcellularLocation>
        <location evidence="1">Host mitochondrion</location>
    </subcellularLocation>
    <text evidence="1">Most NS2 resides in the mitochondria as a heteromer with NS1.</text>
</comment>
<comment type="domain">
    <text evidence="1">The DNLP motif has IFN suppressive functions like binding to host MAP1B.</text>
</comment>
<comment type="similarity">
    <text evidence="2">Belongs to the pneumovirus non-structural protein 2 family.</text>
</comment>
<reference key="1">
    <citation type="journal article" date="1989" name="J. Gen. Virol.">
        <title>The 1B (NS2), 1C (NS1) and N proteins of human respiratory syncytial virus (RSV) of antigenic subgroups A and B: sequence conservation and divergence within RSV genomic RNA.</title>
        <authorList>
            <person name="Johnson P.R."/>
            <person name="Collins P.L."/>
        </authorList>
    </citation>
    <scope>NUCLEOTIDE SEQUENCE [GENOMIC RNA]</scope>
</reference>
<reference key="2">
    <citation type="journal article" date="2019" name="PLoS Pathog.">
        <title>Respiratory syncytial virus nonstructural proteins 1 and 2: Exceptional disrupters of innate immune responses.</title>
        <authorList>
            <person name="Sedeyn K."/>
            <person name="Schepens B."/>
            <person name="Saelens X."/>
        </authorList>
    </citation>
    <scope>REVIEW</scope>
</reference>
<reference key="3">
    <citation type="journal article" date="2020" name="Front. Cell. Infect. Microbiol.">
        <title>Respiratory Syncytial Virus's Non-structural Proteins: Masters of Interference.</title>
        <authorList>
            <person name="Thornhill E.M."/>
            <person name="Verhoeven D."/>
        </authorList>
    </citation>
    <scope>REVIEW</scope>
</reference>
<organism>
    <name type="scientific">Human respiratory syncytial virus B (strain 18537)</name>
    <dbReference type="NCBI Taxonomy" id="11251"/>
    <lineage>
        <taxon>Viruses</taxon>
        <taxon>Riboviria</taxon>
        <taxon>Orthornavirae</taxon>
        <taxon>Negarnaviricota</taxon>
        <taxon>Haploviricotina</taxon>
        <taxon>Monjiviricetes</taxon>
        <taxon>Mononegavirales</taxon>
        <taxon>Pneumoviridae</taxon>
        <taxon>Orthopneumovirus</taxon>
        <taxon>Orthopneumovirus hominis</taxon>
    </lineage>
</organism>
<dbReference type="EMBL" id="D00736">
    <property type="protein sequence ID" value="BAA00636.1"/>
    <property type="molecule type" value="Genomic_RNA"/>
</dbReference>
<dbReference type="PIR" id="B32063">
    <property type="entry name" value="MNNZ15"/>
</dbReference>
<dbReference type="SMR" id="P24569"/>
<dbReference type="GO" id="GO:0033650">
    <property type="term" value="C:host cell mitochondrion"/>
    <property type="evidence" value="ECO:0007669"/>
    <property type="project" value="UniProtKB-SubCell"/>
</dbReference>
<dbReference type="GO" id="GO:0052150">
    <property type="term" value="P:symbiont-mediated perturbation of host apoptosis"/>
    <property type="evidence" value="ECO:0007669"/>
    <property type="project" value="UniProtKB-KW"/>
</dbReference>
<dbReference type="GO" id="GO:0039548">
    <property type="term" value="P:symbiont-mediated suppression of host cytoplasmic pattern recognition receptor signaling pathway via inhibition of IRF3 activity"/>
    <property type="evidence" value="ECO:0007669"/>
    <property type="project" value="UniProtKB-KW"/>
</dbReference>
<dbReference type="GO" id="GO:0039557">
    <property type="term" value="P:symbiont-mediated suppression of host cytoplasmic pattern recognition receptor signaling pathway via inhibition of IRF7 activity"/>
    <property type="evidence" value="ECO:0007669"/>
    <property type="project" value="UniProtKB-KW"/>
</dbReference>
<dbReference type="GO" id="GO:0039540">
    <property type="term" value="P:symbiont-mediated suppression of host cytoplasmic pattern recognition receptor signaling pathway via inhibition of RIG-I activity"/>
    <property type="evidence" value="ECO:0007669"/>
    <property type="project" value="UniProtKB-KW"/>
</dbReference>
<dbReference type="GO" id="GO:0039723">
    <property type="term" value="P:symbiont-mediated suppression of host cytoplasmic pattern recognition receptor signaling pathway via inhibition of TBK1 activity"/>
    <property type="evidence" value="ECO:0007669"/>
    <property type="project" value="UniProtKB-KW"/>
</dbReference>
<dbReference type="GO" id="GO:0039564">
    <property type="term" value="P:symbiont-mediated suppression of host JAK-STAT cascade via inhibition of STAT2 activity"/>
    <property type="evidence" value="ECO:0007669"/>
    <property type="project" value="UniProtKB-KW"/>
</dbReference>
<dbReference type="GO" id="GO:0039722">
    <property type="term" value="P:symbiont-mediated suppression of host toll-like receptor signaling pathway"/>
    <property type="evidence" value="ECO:0007669"/>
    <property type="project" value="UniProtKB-KW"/>
</dbReference>
<dbReference type="GO" id="GO:0039502">
    <property type="term" value="P:symbiont-mediated suppression of host type I interferon-mediated signaling pathway"/>
    <property type="evidence" value="ECO:0007669"/>
    <property type="project" value="UniProtKB-KW"/>
</dbReference>
<dbReference type="InterPro" id="IPR004336">
    <property type="entry name" value="RSV_NS2"/>
</dbReference>
<dbReference type="Pfam" id="PF03113">
    <property type="entry name" value="RSV_NS2"/>
    <property type="match status" value="1"/>
</dbReference>
<accession>P24569</accession>
<organismHost>
    <name type="scientific">Homo sapiens</name>
    <name type="common">Human</name>
    <dbReference type="NCBI Taxonomy" id="9606"/>
</organismHost>
<evidence type="ECO:0000250" key="1">
    <source>
        <dbReference type="UniProtKB" id="P04543"/>
    </source>
</evidence>
<evidence type="ECO:0000305" key="2"/>
<keyword id="KW-1045">Host mitochondrion</keyword>
<keyword id="KW-0945">Host-virus interaction</keyword>
<keyword id="KW-1090">Inhibition of host innate immune response by virus</keyword>
<keyword id="KW-1114">Inhibition of host interferon signaling pathway by virus</keyword>
<keyword id="KW-1092">Inhibition of host IRF3 by virus</keyword>
<keyword id="KW-1093">Inhibition of host IRF7 by virus</keyword>
<keyword id="KW-1088">Inhibition of host RIG-I by virus</keyword>
<keyword id="KW-1113">Inhibition of host RLR pathway by virus</keyword>
<keyword id="KW-1106">Inhibition of host STAT2 by virus</keyword>
<keyword id="KW-1223">Inhibition of host TBK1 by virus</keyword>
<keyword id="KW-1225">Inhibition of host TLR pathway by virus</keyword>
<keyword id="KW-0922">Interferon antiviral system evasion</keyword>
<keyword id="KW-1119">Modulation of host cell apoptosis by virus</keyword>
<keyword id="KW-0899">Viral immunoevasion</keyword>
<gene>
    <name type="primary">1B</name>
    <name type="synonym">NS2</name>
</gene>
<feature type="chain" id="PRO_0000142788" description="Non-structural protein 2">
    <location>
        <begin position="1"/>
        <end position="124"/>
    </location>
</feature>
<feature type="short sequence motif" description="DLNP; interaction with MAP1B" evidence="1">
    <location>
        <begin position="121"/>
        <end position="124"/>
    </location>
</feature>
<name>NS2_HRSV1</name>
<proteinExistence type="inferred from homology"/>
<protein>
    <recommendedName>
        <fullName>Non-structural protein 2</fullName>
        <shortName>NS2</shortName>
    </recommendedName>
    <alternativeName>
        <fullName>Non-structural protein 1B</fullName>
    </alternativeName>
</protein>